<comment type="function">
    <text evidence="2">Calcium-binding protein that interacts with rotavirus cell receptors once the initial attachment by VP4 has been achieved. Rotavirus attachment and entry into the host cell probably involves multiple sequential contacts between the outer capsid proteins VP4 and VP7, and the cell receptors. Following entry into the host cell, low intracellular or intravesicular Ca(2+) concentration probably causes the calcium-stabilized VP7 trimers to dissociate from the virion. This step is probably necessary for the membrane-disrupting entry step and the release of VP4, which is locked onto the virion by VP7.</text>
</comment>
<comment type="subunit">
    <text evidence="2">Homotrimer; disulfide-linked. 2 Ca(2+) ions bound at each subunit interface in the trimer hold the trimer together. Interacts with the intermediate capsid protein VP6. Interacts with the outer capsid protein VP5*.</text>
</comment>
<comment type="subcellular location">
    <subcellularLocation>
        <location evidence="2">Virion</location>
    </subcellularLocation>
    <subcellularLocation>
        <location evidence="2">Host endoplasmic reticulum lumen</location>
    </subcellularLocation>
    <text evidence="2">The outer layer contains 780 copies of VP7, grouped as 260 trimers. Immature double-layered particles assembled in the cytoplasm bud across the membrane of the endoplasmic reticulum, acquiring during this process a transient lipid membrane that is modified with the ER resident viral glycoproteins NSP4 and VP7; these enveloped particles also contain VP4. As the particles move towards the interior of the ER cisternae, the transient lipid membrane and the non-structural protein NSP4 are lost, while the virus surface proteins VP4 and VP7 rearrange to form the outermost virus protein layer, yielding mature infectious triple-layered particles.</text>
</comment>
<comment type="alternative products">
    <event type="alternative initiation"/>
    <isoform>
        <id>P31632-1</id>
        <name>1</name>
        <sequence type="displayed"/>
    </isoform>
    <isoform>
        <id>P31632-2</id>
        <name>2</name>
        <sequence type="described" ref="VSP_038581"/>
    </isoform>
</comment>
<comment type="PTM">
    <text evidence="2">N-glycosylated.</text>
</comment>
<comment type="PTM">
    <text evidence="2">The N-terminus is blocked possibly by pyroglutamic acid.</text>
</comment>
<comment type="miscellaneous">
    <text evidence="2">Some rotavirus strains are neuraminidase-sensitive and require sialic acid to attach to the cell surface. Some rotavirus strains are integrin-dependent. Some rotavirus strains depend on ganglioside for their entry into the host cell. Hsp70 also seems to be involved in the entry of some strains.</text>
</comment>
<comment type="miscellaneous">
    <text evidence="2">In group A rotaviruses, VP7 defines the G serotype.</text>
</comment>
<comment type="miscellaneous">
    <molecule>Isoform 2</molecule>
    <text evidence="3">Produced by alternative initiation at Met-30 of isoform 1.</text>
</comment>
<comment type="similarity">
    <text evidence="2">Belongs to the rotavirus VP7 family.</text>
</comment>
<protein>
    <recommendedName>
        <fullName evidence="2">Outer capsid glycoprotein VP7</fullName>
    </recommendedName>
</protein>
<proteinExistence type="evidence at transcript level"/>
<sequence>MYGIEYTTILIFLVSIILINYILKSITRIMDYIIYRFLFVVVLMAIVTSAQNYGVNLPITGSMDTAYANSTQNEPFLTSTLCLYYPIEASNEIADTEWRNTLSQLFLTKGWPTGSVYFKEYADIAAFSVEPQLYCDYNIVLMKYDSTLELDMSELADLILNEWLCNPMDITLYYYQQTDEANKWISMGSSCTIKVCPLNTQTLGIGCSTTNPDTFETVATAEKLVITDVVDGVNHKLDVTTATCTIRNCKKLGPRENVAVIQVGGANILDITADPTTAPQTERMMRVNWKKWWQVFYTVVDYVNQIIQAMSRRSRSLNSAAFYYRV</sequence>
<evidence type="ECO:0000255" key="1"/>
<evidence type="ECO:0000255" key="2">
    <source>
        <dbReference type="HAMAP-Rule" id="MF_04131"/>
    </source>
</evidence>
<evidence type="ECO:0000305" key="3"/>
<keyword id="KW-0024">Alternative initiation</keyword>
<keyword id="KW-0106">Calcium</keyword>
<keyword id="KW-0167">Capsid protein</keyword>
<keyword id="KW-1015">Disulfide bond</keyword>
<keyword id="KW-0325">Glycoprotein</keyword>
<keyword id="KW-1038">Host endoplasmic reticulum</keyword>
<keyword id="KW-0945">Host-virus interaction</keyword>
<keyword id="KW-0479">Metal-binding</keyword>
<keyword id="KW-1152">Outer capsid protein</keyword>
<keyword id="KW-0732">Signal</keyword>
<keyword id="KW-1146">T=13 icosahedral capsid protein</keyword>
<keyword id="KW-0946">Virion</keyword>
<accession>P31632</accession>
<name>VP7_ROTBJ</name>
<organismHost>
    <name type="scientific">Bos taurus</name>
    <name type="common">Bovine</name>
    <dbReference type="NCBI Taxonomy" id="9913"/>
</organismHost>
<organism>
    <name type="scientific">Rotavirus A (isolate RVA/Cow/Japan/KN-4/1983/G6P8[11])</name>
    <name type="common">RV-A</name>
    <dbReference type="NCBI Taxonomy" id="31587"/>
    <lineage>
        <taxon>Viruses</taxon>
        <taxon>Riboviria</taxon>
        <taxon>Orthornavirae</taxon>
        <taxon>Duplornaviricota</taxon>
        <taxon>Resentoviricetes</taxon>
        <taxon>Reovirales</taxon>
        <taxon>Sedoreoviridae</taxon>
        <taxon>Rotavirus</taxon>
        <taxon>Rotavirus A</taxon>
    </lineage>
</organism>
<dbReference type="EMBL" id="D12710">
    <property type="protein sequence ID" value="BAA02206.1"/>
    <property type="molecule type" value="mRNA"/>
</dbReference>
<dbReference type="PIR" id="JS0720">
    <property type="entry name" value="VGXRK4"/>
</dbReference>
<dbReference type="SMR" id="P31632"/>
<dbReference type="GO" id="GO:0044166">
    <property type="term" value="C:host cell endoplasmic reticulum lumen"/>
    <property type="evidence" value="ECO:0007669"/>
    <property type="project" value="UniProtKB-SubCell"/>
</dbReference>
<dbReference type="GO" id="GO:0039621">
    <property type="term" value="C:T=13 icosahedral viral capsid"/>
    <property type="evidence" value="ECO:0007669"/>
    <property type="project" value="UniProtKB-UniRule"/>
</dbReference>
<dbReference type="GO" id="GO:0039624">
    <property type="term" value="C:viral outer capsid"/>
    <property type="evidence" value="ECO:0007669"/>
    <property type="project" value="UniProtKB-UniRule"/>
</dbReference>
<dbReference type="GO" id="GO:0046872">
    <property type="term" value="F:metal ion binding"/>
    <property type="evidence" value="ECO:0007669"/>
    <property type="project" value="UniProtKB-KW"/>
</dbReference>
<dbReference type="Gene3D" id="3.40.50.11130">
    <property type="entry name" value="Glycoprotein VP7, domain 1"/>
    <property type="match status" value="1"/>
</dbReference>
<dbReference type="Gene3D" id="2.60.120.800">
    <property type="entry name" value="Rotavirus outer-layer protein VP7, domain 2"/>
    <property type="match status" value="1"/>
</dbReference>
<dbReference type="HAMAP" id="MF_04130">
    <property type="entry name" value="Rota_VP7"/>
    <property type="match status" value="1"/>
</dbReference>
<dbReference type="HAMAP" id="MF_04131">
    <property type="entry name" value="Rota_VP7_A"/>
    <property type="match status" value="1"/>
</dbReference>
<dbReference type="InterPro" id="IPR001963">
    <property type="entry name" value="VP7"/>
</dbReference>
<dbReference type="InterPro" id="IPR042207">
    <property type="entry name" value="VP7_1"/>
</dbReference>
<dbReference type="InterPro" id="IPR042210">
    <property type="entry name" value="VP7_2"/>
</dbReference>
<dbReference type="Pfam" id="PF00434">
    <property type="entry name" value="VP7"/>
    <property type="match status" value="1"/>
</dbReference>
<reference key="1">
    <citation type="journal article" date="1993" name="J. Clin. Microbiol.">
        <title>Two-way cross-neutralization mediated by a shared P (VP4) serotype between bovine rotavirus strains with distinct G (VP7) serotypes.</title>
        <authorList>
            <person name="Matsuda Y."/>
            <person name="Isegawa Y."/>
            <person name="Woode G.N."/>
            <person name="Zheng S."/>
            <person name="Kaga E."/>
            <person name="Nakagomi T."/>
            <person name="Ueda S."/>
            <person name="Nakagomi O."/>
        </authorList>
    </citation>
    <scope>NUCLEOTIDE SEQUENCE [MRNA]</scope>
</reference>
<feature type="signal peptide" evidence="2">
    <location>
        <begin position="1"/>
        <end position="50"/>
    </location>
</feature>
<feature type="chain" id="PRO_0000149583" description="Outer capsid glycoprotein VP7" evidence="2">
    <location>
        <begin position="51"/>
        <end position="326"/>
    </location>
</feature>
<feature type="region of interest" description="CNP motif; interaction with ITGAV/ITGB3" evidence="2">
    <location>
        <begin position="165"/>
        <end position="167"/>
    </location>
</feature>
<feature type="region of interest" description="LVD motif; interaction with ITGA4/ITGB1 heterodimer" evidence="2">
    <location>
        <begin position="237"/>
        <end position="239"/>
    </location>
</feature>
<feature type="region of interest" description="GPR motif; interaction with ITGAX/ITGB2" evidence="2">
    <location>
        <begin position="253"/>
        <end position="255"/>
    </location>
</feature>
<feature type="binding site" evidence="2">
    <location>
        <position position="95"/>
    </location>
    <ligand>
        <name>Ca(2+)</name>
        <dbReference type="ChEBI" id="CHEBI:29108"/>
        <label>1</label>
    </ligand>
</feature>
<feature type="binding site" evidence="2">
    <location>
        <position position="177"/>
    </location>
    <ligand>
        <name>Ca(2+)</name>
        <dbReference type="ChEBI" id="CHEBI:29108"/>
        <label>2</label>
    </ligand>
</feature>
<feature type="binding site" evidence="2">
    <location>
        <position position="206"/>
    </location>
    <ligand>
        <name>Ca(2+)</name>
        <dbReference type="ChEBI" id="CHEBI:29108"/>
        <label>1</label>
    </ligand>
</feature>
<feature type="binding site" evidence="2">
    <location>
        <position position="214"/>
    </location>
    <ligand>
        <name>Ca(2+)</name>
        <dbReference type="ChEBI" id="CHEBI:29108"/>
        <label>1</label>
    </ligand>
</feature>
<feature type="binding site" evidence="2">
    <location>
        <position position="216"/>
    </location>
    <ligand>
        <name>Ca(2+)</name>
        <dbReference type="ChEBI" id="CHEBI:29108"/>
        <label>1</label>
    </ligand>
</feature>
<feature type="binding site" evidence="2">
    <location>
        <position position="228"/>
    </location>
    <ligand>
        <name>Ca(2+)</name>
        <dbReference type="ChEBI" id="CHEBI:29108"/>
        <label>2</label>
    </ligand>
</feature>
<feature type="binding site" evidence="2">
    <location>
        <position position="229"/>
    </location>
    <ligand>
        <name>Ca(2+)</name>
        <dbReference type="ChEBI" id="CHEBI:29108"/>
        <label>2</label>
    </ligand>
</feature>
<feature type="binding site" evidence="2">
    <location>
        <position position="231"/>
    </location>
    <ligand>
        <name>Ca(2+)</name>
        <dbReference type="ChEBI" id="CHEBI:29108"/>
        <label>2</label>
    </ligand>
</feature>
<feature type="binding site" evidence="2">
    <location>
        <position position="301"/>
    </location>
    <ligand>
        <name>Ca(2+)</name>
        <dbReference type="ChEBI" id="CHEBI:29108"/>
        <label>2</label>
    </ligand>
</feature>
<feature type="glycosylation site" description="N-linked (GlcNAc...) asparagine; by host" evidence="1">
    <location>
        <position position="69"/>
    </location>
</feature>
<feature type="disulfide bond" evidence="2">
    <location>
        <begin position="82"/>
        <end position="135"/>
    </location>
</feature>
<feature type="disulfide bond" evidence="2">
    <location>
        <begin position="165"/>
        <end position="249"/>
    </location>
</feature>
<feature type="disulfide bond" evidence="2">
    <location>
        <begin position="191"/>
        <end position="244"/>
    </location>
</feature>
<feature type="disulfide bond" evidence="2">
    <location>
        <begin position="196"/>
        <end position="207"/>
    </location>
</feature>
<feature type="splice variant" id="VSP_038581" description="In isoform 2." evidence="3">
    <location>
        <begin position="1"/>
        <end position="29"/>
    </location>
</feature>